<reference key="1">
    <citation type="submission" date="2007-07" db="UniProtKB">
        <authorList>
            <person name="Borges M.H."/>
            <person name="Oliveira C.F.B."/>
            <person name="Goncalves J.M."/>
            <person name="Rates B."/>
            <person name="Santos D.M."/>
            <person name="Pimenta A.M.C."/>
            <person name="Cordeiro M.N."/>
            <person name="Richardson M."/>
        </authorList>
    </citation>
    <scope>PROTEIN SEQUENCE</scope>
    <scope>SUBCELLULAR LOCATION</scope>
    <scope>MASS SPECTROMETRY</scope>
    <source>
        <tissue>Venom</tissue>
    </source>
</reference>
<evidence type="ECO:0000250" key="1">
    <source>
        <dbReference type="UniProtKB" id="P86269"/>
    </source>
</evidence>
<evidence type="ECO:0000269" key="2">
    <source ref="1"/>
</evidence>
<evidence type="ECO:0000303" key="3">
    <source ref="1"/>
</evidence>
<evidence type="ECO:0000305" key="4"/>
<evidence type="ECO:0000305" key="5">
    <source ref="1"/>
</evidence>
<organism>
    <name type="scientific">Ctenus ornatus</name>
    <name type="common">Brazilian spider</name>
    <name type="synonym">Oligoctenus ornatus</name>
    <dbReference type="NCBI Taxonomy" id="406443"/>
    <lineage>
        <taxon>Eukaryota</taxon>
        <taxon>Metazoa</taxon>
        <taxon>Ecdysozoa</taxon>
        <taxon>Arthropoda</taxon>
        <taxon>Chelicerata</taxon>
        <taxon>Arachnida</taxon>
        <taxon>Araneae</taxon>
        <taxon>Araneomorphae</taxon>
        <taxon>Entelegynae</taxon>
        <taxon>Lycosoidea</taxon>
        <taxon>Ctenidae</taxon>
        <taxon>Oligoctenus</taxon>
    </lineage>
</organism>
<proteinExistence type="evidence at protein level"/>
<dbReference type="SMR" id="P85236"/>
<dbReference type="ArachnoServer" id="AS000004">
    <property type="toxin name" value="U20-ctenitoxin-Co1a"/>
</dbReference>
<dbReference type="GO" id="GO:0005576">
    <property type="term" value="C:extracellular region"/>
    <property type="evidence" value="ECO:0007669"/>
    <property type="project" value="UniProtKB-SubCell"/>
</dbReference>
<protein>
    <recommendedName>
        <fullName evidence="4">U20-ctenitoxin-Co1a</fullName>
        <shortName evidence="4">U20-CNTX-Co1a</shortName>
    </recommendedName>
    <alternativeName>
        <fullName evidence="3">Venom peptide Oc F9-5</fullName>
    </alternativeName>
</protein>
<feature type="peptide" id="PRO_0000302108" description="U20-ctenitoxin-Co1a" evidence="5">
    <location>
        <begin position="1"/>
        <end position="29" status="greater than"/>
    </location>
</feature>
<feature type="disulfide bond" evidence="1">
    <location>
        <begin position="3"/>
        <end position="16"/>
    </location>
</feature>
<feature type="disulfide bond" evidence="1">
    <location>
        <begin position="10"/>
        <end position="21"/>
    </location>
</feature>
<feature type="disulfide bond" evidence="1">
    <location>
        <begin position="15"/>
        <end status="unknown"/>
    </location>
</feature>
<feature type="non-terminal residue" evidence="5">
    <location>
        <position position="29"/>
    </location>
</feature>
<comment type="subcellular location">
    <subcellularLocation>
        <location evidence="2">Secreted</location>
    </subcellularLocation>
</comment>
<comment type="tissue specificity">
    <text evidence="5">Expressed by the venom gland.</text>
</comment>
<comment type="mass spectrometry"/>
<comment type="similarity">
    <text evidence="4">Belongs to the neurotoxin 33 family.</text>
</comment>
<accession>P85236</accession>
<name>F95_CTEON</name>
<keyword id="KW-0903">Direct protein sequencing</keyword>
<keyword id="KW-1015">Disulfide bond</keyword>
<keyword id="KW-0964">Secreted</keyword>
<sequence>GFCAEAGIKCNDIHCCGNLKCKAVGSNRV</sequence>